<sequence>MRIIFAGTPDFAVASLRAAAQRHEVVAVYTQPDRPAGRGRGLTPSPVKIEAIARGIAVFQPQTLRSPEALATLRSLNADLMVVVAYGLILPNAVLAVPTHGCWNVHASLLPRWRGAAPIQRAIEAGDTETGVCLMQMEAGLDIGPVLLSQRIEIGEQETGGQLHDRLAALGAQVLSDGLGLLRAGIRPVAQPQPAEGVTYAHKLDKAQARLDWAQPAQELARRVRAFNPWPVAEAILAGERVRLHGAVALELAHQQPPGSLLAASKQGIDIACGQGALRVRVLQREGGKAITAADYLNARRDLLALR</sequence>
<name>FMT_XANOP</name>
<dbReference type="EC" id="2.1.2.9" evidence="1"/>
<dbReference type="EMBL" id="CP000967">
    <property type="protein sequence ID" value="ACD57331.1"/>
    <property type="molecule type" value="Genomic_DNA"/>
</dbReference>
<dbReference type="RefSeq" id="WP_011257494.1">
    <property type="nucleotide sequence ID" value="NC_010717.2"/>
</dbReference>
<dbReference type="SMR" id="B2SL54"/>
<dbReference type="KEGG" id="xop:PXO_04056"/>
<dbReference type="eggNOG" id="COG0223">
    <property type="taxonomic scope" value="Bacteria"/>
</dbReference>
<dbReference type="HOGENOM" id="CLU_033347_1_2_6"/>
<dbReference type="Proteomes" id="UP000001740">
    <property type="component" value="Chromosome"/>
</dbReference>
<dbReference type="GO" id="GO:0005829">
    <property type="term" value="C:cytosol"/>
    <property type="evidence" value="ECO:0007669"/>
    <property type="project" value="TreeGrafter"/>
</dbReference>
<dbReference type="GO" id="GO:0004479">
    <property type="term" value="F:methionyl-tRNA formyltransferase activity"/>
    <property type="evidence" value="ECO:0007669"/>
    <property type="project" value="UniProtKB-UniRule"/>
</dbReference>
<dbReference type="CDD" id="cd08646">
    <property type="entry name" value="FMT_core_Met-tRNA-FMT_N"/>
    <property type="match status" value="1"/>
</dbReference>
<dbReference type="CDD" id="cd08704">
    <property type="entry name" value="Met_tRNA_FMT_C"/>
    <property type="match status" value="1"/>
</dbReference>
<dbReference type="Gene3D" id="3.10.25.10">
    <property type="entry name" value="Formyl transferase, C-terminal domain"/>
    <property type="match status" value="1"/>
</dbReference>
<dbReference type="Gene3D" id="3.40.50.170">
    <property type="entry name" value="Formyl transferase, N-terminal domain"/>
    <property type="match status" value="1"/>
</dbReference>
<dbReference type="HAMAP" id="MF_00182">
    <property type="entry name" value="Formyl_trans"/>
    <property type="match status" value="1"/>
</dbReference>
<dbReference type="InterPro" id="IPR005794">
    <property type="entry name" value="Fmt"/>
</dbReference>
<dbReference type="InterPro" id="IPR005793">
    <property type="entry name" value="Formyl_trans_C"/>
</dbReference>
<dbReference type="InterPro" id="IPR037022">
    <property type="entry name" value="Formyl_trans_C_sf"/>
</dbReference>
<dbReference type="InterPro" id="IPR002376">
    <property type="entry name" value="Formyl_transf_N"/>
</dbReference>
<dbReference type="InterPro" id="IPR036477">
    <property type="entry name" value="Formyl_transf_N_sf"/>
</dbReference>
<dbReference type="InterPro" id="IPR011034">
    <property type="entry name" value="Formyl_transferase-like_C_sf"/>
</dbReference>
<dbReference type="InterPro" id="IPR001555">
    <property type="entry name" value="GART_AS"/>
</dbReference>
<dbReference type="InterPro" id="IPR044135">
    <property type="entry name" value="Met-tRNA-FMT_C"/>
</dbReference>
<dbReference type="InterPro" id="IPR041711">
    <property type="entry name" value="Met-tRNA-FMT_N"/>
</dbReference>
<dbReference type="NCBIfam" id="TIGR00460">
    <property type="entry name" value="fmt"/>
    <property type="match status" value="1"/>
</dbReference>
<dbReference type="PANTHER" id="PTHR11138">
    <property type="entry name" value="METHIONYL-TRNA FORMYLTRANSFERASE"/>
    <property type="match status" value="1"/>
</dbReference>
<dbReference type="PANTHER" id="PTHR11138:SF5">
    <property type="entry name" value="METHIONYL-TRNA FORMYLTRANSFERASE, MITOCHONDRIAL"/>
    <property type="match status" value="1"/>
</dbReference>
<dbReference type="Pfam" id="PF02911">
    <property type="entry name" value="Formyl_trans_C"/>
    <property type="match status" value="1"/>
</dbReference>
<dbReference type="Pfam" id="PF00551">
    <property type="entry name" value="Formyl_trans_N"/>
    <property type="match status" value="1"/>
</dbReference>
<dbReference type="SUPFAM" id="SSF50486">
    <property type="entry name" value="FMT C-terminal domain-like"/>
    <property type="match status" value="1"/>
</dbReference>
<dbReference type="SUPFAM" id="SSF53328">
    <property type="entry name" value="Formyltransferase"/>
    <property type="match status" value="1"/>
</dbReference>
<dbReference type="PROSITE" id="PS00373">
    <property type="entry name" value="GART"/>
    <property type="match status" value="1"/>
</dbReference>
<reference key="1">
    <citation type="journal article" date="2008" name="BMC Genomics">
        <title>Genome sequence and rapid evolution of the rice pathogen Xanthomonas oryzae pv. oryzae PXO99A.</title>
        <authorList>
            <person name="Salzberg S.L."/>
            <person name="Sommer D.D."/>
            <person name="Schatz M.C."/>
            <person name="Phillippy A.M."/>
            <person name="Rabinowicz P.D."/>
            <person name="Tsuge S."/>
            <person name="Furutani A."/>
            <person name="Ochiai H."/>
            <person name="Delcher A.L."/>
            <person name="Kelley D."/>
            <person name="Madupu R."/>
            <person name="Puiu D."/>
            <person name="Radune D."/>
            <person name="Shumway M."/>
            <person name="Trapnell C."/>
            <person name="Aparna G."/>
            <person name="Jha G."/>
            <person name="Pandey A."/>
            <person name="Patil P.B."/>
            <person name="Ishihara H."/>
            <person name="Meyer D.F."/>
            <person name="Szurek B."/>
            <person name="Verdier V."/>
            <person name="Koebnik R."/>
            <person name="Dow J.M."/>
            <person name="Ryan R.P."/>
            <person name="Hirata H."/>
            <person name="Tsuyumu S."/>
            <person name="Won Lee S."/>
            <person name="Seo Y.-S."/>
            <person name="Sriariyanum M."/>
            <person name="Ronald P.C."/>
            <person name="Sonti R.V."/>
            <person name="Van Sluys M.-A."/>
            <person name="Leach J.E."/>
            <person name="White F.F."/>
            <person name="Bogdanove A.J."/>
        </authorList>
    </citation>
    <scope>NUCLEOTIDE SEQUENCE [LARGE SCALE GENOMIC DNA]</scope>
    <source>
        <strain>PXO99A</strain>
    </source>
</reference>
<gene>
    <name evidence="1" type="primary">fmt</name>
    <name type="ordered locus">PXO_04056</name>
</gene>
<protein>
    <recommendedName>
        <fullName evidence="1">Methionyl-tRNA formyltransferase</fullName>
        <ecNumber evidence="1">2.1.2.9</ecNumber>
    </recommendedName>
</protein>
<organism>
    <name type="scientific">Xanthomonas oryzae pv. oryzae (strain PXO99A)</name>
    <dbReference type="NCBI Taxonomy" id="360094"/>
    <lineage>
        <taxon>Bacteria</taxon>
        <taxon>Pseudomonadati</taxon>
        <taxon>Pseudomonadota</taxon>
        <taxon>Gammaproteobacteria</taxon>
        <taxon>Lysobacterales</taxon>
        <taxon>Lysobacteraceae</taxon>
        <taxon>Xanthomonas</taxon>
    </lineage>
</organism>
<accession>B2SL54</accession>
<comment type="function">
    <text evidence="1">Attaches a formyl group to the free amino group of methionyl-tRNA(fMet). The formyl group appears to play a dual role in the initiator identity of N-formylmethionyl-tRNA by promoting its recognition by IF2 and preventing the misappropriation of this tRNA by the elongation apparatus.</text>
</comment>
<comment type="catalytic activity">
    <reaction evidence="1">
        <text>L-methionyl-tRNA(fMet) + (6R)-10-formyltetrahydrofolate = N-formyl-L-methionyl-tRNA(fMet) + (6S)-5,6,7,8-tetrahydrofolate + H(+)</text>
        <dbReference type="Rhea" id="RHEA:24380"/>
        <dbReference type="Rhea" id="RHEA-COMP:9952"/>
        <dbReference type="Rhea" id="RHEA-COMP:9953"/>
        <dbReference type="ChEBI" id="CHEBI:15378"/>
        <dbReference type="ChEBI" id="CHEBI:57453"/>
        <dbReference type="ChEBI" id="CHEBI:78530"/>
        <dbReference type="ChEBI" id="CHEBI:78844"/>
        <dbReference type="ChEBI" id="CHEBI:195366"/>
        <dbReference type="EC" id="2.1.2.9"/>
    </reaction>
</comment>
<comment type="similarity">
    <text evidence="1">Belongs to the Fmt family.</text>
</comment>
<evidence type="ECO:0000255" key="1">
    <source>
        <dbReference type="HAMAP-Rule" id="MF_00182"/>
    </source>
</evidence>
<keyword id="KW-0648">Protein biosynthesis</keyword>
<keyword id="KW-0808">Transferase</keyword>
<feature type="chain" id="PRO_1000098461" description="Methionyl-tRNA formyltransferase">
    <location>
        <begin position="1"/>
        <end position="307"/>
    </location>
</feature>
<feature type="binding site" evidence="1">
    <location>
        <begin position="108"/>
        <end position="111"/>
    </location>
    <ligand>
        <name>(6S)-5,6,7,8-tetrahydrofolate</name>
        <dbReference type="ChEBI" id="CHEBI:57453"/>
    </ligand>
</feature>
<proteinExistence type="inferred from homology"/>